<dbReference type="EC" id="6.3.2.9" evidence="1"/>
<dbReference type="EMBL" id="CR954246">
    <property type="protein sequence ID" value="CAI87554.1"/>
    <property type="molecule type" value="Genomic_DNA"/>
</dbReference>
<dbReference type="SMR" id="Q3IG02"/>
<dbReference type="STRING" id="326442.PSHAa2506"/>
<dbReference type="KEGG" id="pha:PSHAa2506"/>
<dbReference type="PATRIC" id="fig|326442.8.peg.2416"/>
<dbReference type="eggNOG" id="COG0771">
    <property type="taxonomic scope" value="Bacteria"/>
</dbReference>
<dbReference type="HOGENOM" id="CLU_032540_1_0_6"/>
<dbReference type="BioCyc" id="PHAL326442:PSHA_RS12340-MONOMER"/>
<dbReference type="UniPathway" id="UPA00219"/>
<dbReference type="Proteomes" id="UP000006843">
    <property type="component" value="Chromosome I"/>
</dbReference>
<dbReference type="GO" id="GO:0005737">
    <property type="term" value="C:cytoplasm"/>
    <property type="evidence" value="ECO:0007669"/>
    <property type="project" value="UniProtKB-SubCell"/>
</dbReference>
<dbReference type="GO" id="GO:0005524">
    <property type="term" value="F:ATP binding"/>
    <property type="evidence" value="ECO:0007669"/>
    <property type="project" value="UniProtKB-UniRule"/>
</dbReference>
<dbReference type="GO" id="GO:0008764">
    <property type="term" value="F:UDP-N-acetylmuramoylalanine-D-glutamate ligase activity"/>
    <property type="evidence" value="ECO:0007669"/>
    <property type="project" value="UniProtKB-UniRule"/>
</dbReference>
<dbReference type="GO" id="GO:0051301">
    <property type="term" value="P:cell division"/>
    <property type="evidence" value="ECO:0007669"/>
    <property type="project" value="UniProtKB-KW"/>
</dbReference>
<dbReference type="GO" id="GO:0071555">
    <property type="term" value="P:cell wall organization"/>
    <property type="evidence" value="ECO:0007669"/>
    <property type="project" value="UniProtKB-KW"/>
</dbReference>
<dbReference type="GO" id="GO:0009252">
    <property type="term" value="P:peptidoglycan biosynthetic process"/>
    <property type="evidence" value="ECO:0007669"/>
    <property type="project" value="UniProtKB-UniRule"/>
</dbReference>
<dbReference type="GO" id="GO:0008360">
    <property type="term" value="P:regulation of cell shape"/>
    <property type="evidence" value="ECO:0007669"/>
    <property type="project" value="UniProtKB-KW"/>
</dbReference>
<dbReference type="Gene3D" id="3.90.190.20">
    <property type="entry name" value="Mur ligase, C-terminal domain"/>
    <property type="match status" value="1"/>
</dbReference>
<dbReference type="Gene3D" id="3.40.1190.10">
    <property type="entry name" value="Mur-like, catalytic domain"/>
    <property type="match status" value="1"/>
</dbReference>
<dbReference type="Gene3D" id="3.40.50.720">
    <property type="entry name" value="NAD(P)-binding Rossmann-like Domain"/>
    <property type="match status" value="1"/>
</dbReference>
<dbReference type="HAMAP" id="MF_00639">
    <property type="entry name" value="MurD"/>
    <property type="match status" value="1"/>
</dbReference>
<dbReference type="InterPro" id="IPR036565">
    <property type="entry name" value="Mur-like_cat_sf"/>
</dbReference>
<dbReference type="InterPro" id="IPR004101">
    <property type="entry name" value="Mur_ligase_C"/>
</dbReference>
<dbReference type="InterPro" id="IPR036615">
    <property type="entry name" value="Mur_ligase_C_dom_sf"/>
</dbReference>
<dbReference type="InterPro" id="IPR013221">
    <property type="entry name" value="Mur_ligase_cen"/>
</dbReference>
<dbReference type="InterPro" id="IPR005762">
    <property type="entry name" value="MurD"/>
</dbReference>
<dbReference type="NCBIfam" id="TIGR01087">
    <property type="entry name" value="murD"/>
    <property type="match status" value="1"/>
</dbReference>
<dbReference type="PANTHER" id="PTHR43692">
    <property type="entry name" value="UDP-N-ACETYLMURAMOYLALANINE--D-GLUTAMATE LIGASE"/>
    <property type="match status" value="1"/>
</dbReference>
<dbReference type="PANTHER" id="PTHR43692:SF1">
    <property type="entry name" value="UDP-N-ACETYLMURAMOYLALANINE--D-GLUTAMATE LIGASE"/>
    <property type="match status" value="1"/>
</dbReference>
<dbReference type="Pfam" id="PF02875">
    <property type="entry name" value="Mur_ligase_C"/>
    <property type="match status" value="1"/>
</dbReference>
<dbReference type="Pfam" id="PF08245">
    <property type="entry name" value="Mur_ligase_M"/>
    <property type="match status" value="1"/>
</dbReference>
<dbReference type="Pfam" id="PF21799">
    <property type="entry name" value="MurD-like_N"/>
    <property type="match status" value="1"/>
</dbReference>
<dbReference type="SUPFAM" id="SSF51984">
    <property type="entry name" value="MurCD N-terminal domain"/>
    <property type="match status" value="1"/>
</dbReference>
<dbReference type="SUPFAM" id="SSF53623">
    <property type="entry name" value="MurD-like peptide ligases, catalytic domain"/>
    <property type="match status" value="1"/>
</dbReference>
<dbReference type="SUPFAM" id="SSF53244">
    <property type="entry name" value="MurD-like peptide ligases, peptide-binding domain"/>
    <property type="match status" value="1"/>
</dbReference>
<comment type="function">
    <text evidence="1">Cell wall formation. Catalyzes the addition of glutamate to the nucleotide precursor UDP-N-acetylmuramoyl-L-alanine (UMA).</text>
</comment>
<comment type="catalytic activity">
    <reaction evidence="1">
        <text>UDP-N-acetyl-alpha-D-muramoyl-L-alanine + D-glutamate + ATP = UDP-N-acetyl-alpha-D-muramoyl-L-alanyl-D-glutamate + ADP + phosphate + H(+)</text>
        <dbReference type="Rhea" id="RHEA:16429"/>
        <dbReference type="ChEBI" id="CHEBI:15378"/>
        <dbReference type="ChEBI" id="CHEBI:29986"/>
        <dbReference type="ChEBI" id="CHEBI:30616"/>
        <dbReference type="ChEBI" id="CHEBI:43474"/>
        <dbReference type="ChEBI" id="CHEBI:83898"/>
        <dbReference type="ChEBI" id="CHEBI:83900"/>
        <dbReference type="ChEBI" id="CHEBI:456216"/>
        <dbReference type="EC" id="6.3.2.9"/>
    </reaction>
</comment>
<comment type="pathway">
    <text evidence="1">Cell wall biogenesis; peptidoglycan biosynthesis.</text>
</comment>
<comment type="subcellular location">
    <subcellularLocation>
        <location evidence="1">Cytoplasm</location>
    </subcellularLocation>
</comment>
<comment type="similarity">
    <text evidence="1">Belongs to the MurCDEF family.</text>
</comment>
<keyword id="KW-0067">ATP-binding</keyword>
<keyword id="KW-0131">Cell cycle</keyword>
<keyword id="KW-0132">Cell division</keyword>
<keyword id="KW-0133">Cell shape</keyword>
<keyword id="KW-0961">Cell wall biogenesis/degradation</keyword>
<keyword id="KW-0963">Cytoplasm</keyword>
<keyword id="KW-0436">Ligase</keyword>
<keyword id="KW-0547">Nucleotide-binding</keyword>
<keyword id="KW-0573">Peptidoglycan synthesis</keyword>
<keyword id="KW-1185">Reference proteome</keyword>
<gene>
    <name evidence="1" type="primary">murD</name>
    <name type="ordered locus">PSHAa2506</name>
</gene>
<name>MURD_PSET1</name>
<reference key="1">
    <citation type="journal article" date="2005" name="Genome Res.">
        <title>Coping with cold: the genome of the versatile marine Antarctica bacterium Pseudoalteromonas haloplanktis TAC125.</title>
        <authorList>
            <person name="Medigue C."/>
            <person name="Krin E."/>
            <person name="Pascal G."/>
            <person name="Barbe V."/>
            <person name="Bernsel A."/>
            <person name="Bertin P.N."/>
            <person name="Cheung F."/>
            <person name="Cruveiller S."/>
            <person name="D'Amico S."/>
            <person name="Duilio A."/>
            <person name="Fang G."/>
            <person name="Feller G."/>
            <person name="Ho C."/>
            <person name="Mangenot S."/>
            <person name="Marino G."/>
            <person name="Nilsson J."/>
            <person name="Parrilli E."/>
            <person name="Rocha E.P.C."/>
            <person name="Rouy Z."/>
            <person name="Sekowska A."/>
            <person name="Tutino M.L."/>
            <person name="Vallenet D."/>
            <person name="von Heijne G."/>
            <person name="Danchin A."/>
        </authorList>
    </citation>
    <scope>NUCLEOTIDE SEQUENCE [LARGE SCALE GENOMIC DNA]</scope>
    <source>
        <strain>TAC 125</strain>
    </source>
</reference>
<organism>
    <name type="scientific">Pseudoalteromonas translucida (strain TAC 125)</name>
    <dbReference type="NCBI Taxonomy" id="326442"/>
    <lineage>
        <taxon>Bacteria</taxon>
        <taxon>Pseudomonadati</taxon>
        <taxon>Pseudomonadota</taxon>
        <taxon>Gammaproteobacteria</taxon>
        <taxon>Alteromonadales</taxon>
        <taxon>Pseudoalteromonadaceae</taxon>
        <taxon>Pseudoalteromonas</taxon>
    </lineage>
</organism>
<sequence>MRYLSEIKNKQITVLGLGVTGLGIVRFLVSQGLTPTVVDSRINPPGIDWLKQNTPTLTTRFGDLDSADLCASDMIIISPGLSLTIPAIAKAINAGVEVIGDVELFARINTKPVVAVTGSNGKSTVVTLAQQVLLAAGYKAALGGNIGTAVLDLLQSDLSNNDVDVYVLELSSFQLDTTTSLQPISATVLNVSEDHLDRYASYQAYIDSKLSIYNNAALVITNADDEATHSKAKSQLSFGANQGDYSLGEYQQQTYFMQANKAFLPVTSLAVVGKHNYLNALAVMALLSPFNISKAQYSTAFSQFNGLAHRCQFVAERAGVKYFNDSKATNVGATIAAIDSLATNGQQLIVIAGGDAKGADLNALTPYLQQHVKALICFGKDAKDLMALTNKSHLTNNMSEAVTLAKQLSEPGNIVLLAPACASIDMYNNYMQRGDDFIQCVMAEQP</sequence>
<accession>Q3IG02</accession>
<feature type="chain" id="PRO_0000257216" description="UDP-N-acetylmuramoylalanine--D-glutamate ligase">
    <location>
        <begin position="1"/>
        <end position="446"/>
    </location>
</feature>
<feature type="binding site" evidence="1">
    <location>
        <begin position="118"/>
        <end position="124"/>
    </location>
    <ligand>
        <name>ATP</name>
        <dbReference type="ChEBI" id="CHEBI:30616"/>
    </ligand>
</feature>
<proteinExistence type="inferred from homology"/>
<evidence type="ECO:0000255" key="1">
    <source>
        <dbReference type="HAMAP-Rule" id="MF_00639"/>
    </source>
</evidence>
<protein>
    <recommendedName>
        <fullName evidence="1">UDP-N-acetylmuramoylalanine--D-glutamate ligase</fullName>
        <ecNumber evidence="1">6.3.2.9</ecNumber>
    </recommendedName>
    <alternativeName>
        <fullName evidence="1">D-glutamic acid-adding enzyme</fullName>
    </alternativeName>
    <alternativeName>
        <fullName evidence="1">UDP-N-acetylmuramoyl-L-alanyl-D-glutamate synthetase</fullName>
    </alternativeName>
</protein>